<dbReference type="EC" id="3.2.1.14"/>
<dbReference type="EMBL" id="X63899">
    <property type="protein sequence ID" value="CAA45359.1"/>
    <property type="molecule type" value="mRNA"/>
</dbReference>
<dbReference type="PIR" id="S59947">
    <property type="entry name" value="S59947"/>
</dbReference>
<dbReference type="SMR" id="P36907"/>
<dbReference type="CAZy" id="CBM18">
    <property type="family name" value="Carbohydrate-Binding Module Family 18"/>
</dbReference>
<dbReference type="CAZy" id="GH19">
    <property type="family name" value="Glycoside Hydrolase Family 19"/>
</dbReference>
<dbReference type="GO" id="GO:0008061">
    <property type="term" value="F:chitin binding"/>
    <property type="evidence" value="ECO:0007669"/>
    <property type="project" value="UniProtKB-KW"/>
</dbReference>
<dbReference type="GO" id="GO:0008843">
    <property type="term" value="F:endochitinase activity"/>
    <property type="evidence" value="ECO:0007669"/>
    <property type="project" value="UniProtKB-EC"/>
</dbReference>
<dbReference type="GO" id="GO:0016998">
    <property type="term" value="P:cell wall macromolecule catabolic process"/>
    <property type="evidence" value="ECO:0007669"/>
    <property type="project" value="InterPro"/>
</dbReference>
<dbReference type="GO" id="GO:0006032">
    <property type="term" value="P:chitin catabolic process"/>
    <property type="evidence" value="ECO:0007669"/>
    <property type="project" value="UniProtKB-KW"/>
</dbReference>
<dbReference type="GO" id="GO:0050832">
    <property type="term" value="P:defense response to fungus"/>
    <property type="evidence" value="ECO:0007669"/>
    <property type="project" value="TreeGrafter"/>
</dbReference>
<dbReference type="GO" id="GO:0000272">
    <property type="term" value="P:polysaccharide catabolic process"/>
    <property type="evidence" value="ECO:0007669"/>
    <property type="project" value="UniProtKB-KW"/>
</dbReference>
<dbReference type="CDD" id="cd00325">
    <property type="entry name" value="chitinase_GH19"/>
    <property type="match status" value="1"/>
</dbReference>
<dbReference type="CDD" id="cd06921">
    <property type="entry name" value="ChtBD1_GH19_hevein"/>
    <property type="match status" value="1"/>
</dbReference>
<dbReference type="FunFam" id="3.30.60.10:FF:000001">
    <property type="entry name" value="Basic endochitinase"/>
    <property type="match status" value="1"/>
</dbReference>
<dbReference type="FunFam" id="3.30.20.10:FF:000001">
    <property type="entry name" value="Endochitinase (Chitinase)"/>
    <property type="match status" value="1"/>
</dbReference>
<dbReference type="Gene3D" id="1.10.530.10">
    <property type="match status" value="1"/>
</dbReference>
<dbReference type="Gene3D" id="3.30.20.10">
    <property type="entry name" value="Endochitinase, domain 2"/>
    <property type="match status" value="1"/>
</dbReference>
<dbReference type="Gene3D" id="3.30.60.10">
    <property type="entry name" value="Endochitinase-like"/>
    <property type="match status" value="1"/>
</dbReference>
<dbReference type="InterPro" id="IPR001002">
    <property type="entry name" value="Chitin-bd_1"/>
</dbReference>
<dbReference type="InterPro" id="IPR018371">
    <property type="entry name" value="Chitin-binding_1_CS"/>
</dbReference>
<dbReference type="InterPro" id="IPR036861">
    <property type="entry name" value="Endochitinase-like_sf"/>
</dbReference>
<dbReference type="InterPro" id="IPR016283">
    <property type="entry name" value="Glyco_hydro_19"/>
</dbReference>
<dbReference type="InterPro" id="IPR000726">
    <property type="entry name" value="Glyco_hydro_19_cat"/>
</dbReference>
<dbReference type="InterPro" id="IPR023346">
    <property type="entry name" value="Lysozyme-like_dom_sf"/>
</dbReference>
<dbReference type="PANTHER" id="PTHR22595:SF171">
    <property type="entry name" value="BASIC ENDOCHITINASE B"/>
    <property type="match status" value="1"/>
</dbReference>
<dbReference type="PANTHER" id="PTHR22595">
    <property type="entry name" value="CHITINASE-RELATED"/>
    <property type="match status" value="1"/>
</dbReference>
<dbReference type="Pfam" id="PF00187">
    <property type="entry name" value="Chitin_bind_1"/>
    <property type="match status" value="1"/>
</dbReference>
<dbReference type="Pfam" id="PF00182">
    <property type="entry name" value="Glyco_hydro_19"/>
    <property type="match status" value="1"/>
</dbReference>
<dbReference type="PIRSF" id="PIRSF001060">
    <property type="entry name" value="Endochitinase"/>
    <property type="match status" value="1"/>
</dbReference>
<dbReference type="PRINTS" id="PR00451">
    <property type="entry name" value="CHITINBINDNG"/>
</dbReference>
<dbReference type="SMART" id="SM00270">
    <property type="entry name" value="ChtBD1"/>
    <property type="match status" value="1"/>
</dbReference>
<dbReference type="SUPFAM" id="SSF53955">
    <property type="entry name" value="Lysozyme-like"/>
    <property type="match status" value="1"/>
</dbReference>
<dbReference type="SUPFAM" id="SSF57016">
    <property type="entry name" value="Plant lectins/antimicrobial peptides"/>
    <property type="match status" value="1"/>
</dbReference>
<dbReference type="PROSITE" id="PS00026">
    <property type="entry name" value="CHIT_BIND_I_1"/>
    <property type="match status" value="1"/>
</dbReference>
<dbReference type="PROSITE" id="PS50941">
    <property type="entry name" value="CHIT_BIND_I_2"/>
    <property type="match status" value="1"/>
</dbReference>
<dbReference type="PROSITE" id="PS00773">
    <property type="entry name" value="CHITINASE_19_1"/>
    <property type="match status" value="1"/>
</dbReference>
<dbReference type="PROSITE" id="PS00774">
    <property type="entry name" value="CHITINASE_19_2"/>
    <property type="match status" value="1"/>
</dbReference>
<protein>
    <recommendedName>
        <fullName>Endochitinase</fullName>
        <ecNumber>3.2.1.14</ecNumber>
    </recommendedName>
</protein>
<organism>
    <name type="scientific">Pisum sativum</name>
    <name type="common">Garden pea</name>
    <name type="synonym">Lathyrus oleraceus</name>
    <dbReference type="NCBI Taxonomy" id="3888"/>
    <lineage>
        <taxon>Eukaryota</taxon>
        <taxon>Viridiplantae</taxon>
        <taxon>Streptophyta</taxon>
        <taxon>Embryophyta</taxon>
        <taxon>Tracheophyta</taxon>
        <taxon>Spermatophyta</taxon>
        <taxon>Magnoliopsida</taxon>
        <taxon>eudicotyledons</taxon>
        <taxon>Gunneridae</taxon>
        <taxon>Pentapetalae</taxon>
        <taxon>rosids</taxon>
        <taxon>fabids</taxon>
        <taxon>Fabales</taxon>
        <taxon>Fabaceae</taxon>
        <taxon>Papilionoideae</taxon>
        <taxon>50 kb inversion clade</taxon>
        <taxon>NPAAA clade</taxon>
        <taxon>Hologalegina</taxon>
        <taxon>IRL clade</taxon>
        <taxon>Fabeae</taxon>
        <taxon>Pisum</taxon>
    </lineage>
</organism>
<proteinExistence type="evidence at transcript level"/>
<feature type="signal peptide" evidence="1">
    <location>
        <begin position="1"/>
        <end position="23"/>
    </location>
</feature>
<feature type="chain" id="PRO_0000005307" description="Endochitinase">
    <location>
        <begin position="24"/>
        <end position="320"/>
    </location>
</feature>
<feature type="domain" description="Chitin-binding type-1" evidence="3">
    <location>
        <begin position="24"/>
        <end position="64"/>
    </location>
</feature>
<feature type="active site" description="Proton donor" evidence="2">
    <location>
        <position position="145"/>
    </location>
</feature>
<feature type="disulfide bond" evidence="3">
    <location>
        <begin position="26"/>
        <end position="41"/>
    </location>
</feature>
<feature type="disulfide bond" evidence="3">
    <location>
        <begin position="35"/>
        <end position="47"/>
    </location>
</feature>
<feature type="disulfide bond" evidence="3">
    <location>
        <begin position="40"/>
        <end position="54"/>
    </location>
</feature>
<feature type="disulfide bond" evidence="3">
    <location>
        <begin position="58"/>
        <end position="62"/>
    </location>
</feature>
<feature type="disulfide bond" evidence="3">
    <location>
        <begin position="101"/>
        <end position="163"/>
    </location>
</feature>
<feature type="disulfide bond" evidence="3">
    <location>
        <begin position="175"/>
        <end position="182"/>
    </location>
</feature>
<feature type="disulfide bond" evidence="3">
    <location>
        <begin position="281"/>
        <end position="313"/>
    </location>
</feature>
<comment type="function">
    <text>Defense against chitin-containing fungal pathogens.</text>
</comment>
<comment type="catalytic activity">
    <reaction>
        <text>Random endo-hydrolysis of N-acetyl-beta-D-glucosaminide (1-&gt;4)-beta-linkages in chitin and chitodextrins.</text>
        <dbReference type="EC" id="3.2.1.14"/>
    </reaction>
</comment>
<comment type="induction">
    <text>By fungal infection.</text>
</comment>
<comment type="similarity">
    <text evidence="4">Belongs to the glycosyl hydrolase 19 family. Chitinase class I subfamily.</text>
</comment>
<evidence type="ECO:0000250" key="1"/>
<evidence type="ECO:0000250" key="2">
    <source>
        <dbReference type="UniProtKB" id="P29022"/>
    </source>
</evidence>
<evidence type="ECO:0000255" key="3">
    <source>
        <dbReference type="PROSITE-ProRule" id="PRU00261"/>
    </source>
</evidence>
<evidence type="ECO:0000305" key="4"/>
<sequence length="320" mass="34508">MKRTLKVSFFILCLLPLFLGSKAEQCGSQAGGAVCPNGLCCSKFGFCGSTDPYCGDGCQSQCKSSPTPTIPTPSTGGGDVGRLVPSSLFDQMLKYRNDGRCAGHGFYTYDAFIAAARSFNGFGTTGDDNTKKKELAAFLAQTSHETTGGWPTAPDGPYAWGYCFVSEQNTQEVYCSPKDWPCAPGKKYYGRGPIQLTHNYNYGLAGQAIKEDLINNPDLLSTNPTVSFKTAIWFWMTPQANKPSSHDVITGRWTPSAADSSAGRVPGYGVITNIINGGIECGHGQDNRVDDRVGFYKRYCQIFGVDPGGNLDCNNQRSFA</sequence>
<name>CHIX_PEA</name>
<accession>P36907</accession>
<reference key="1">
    <citation type="journal article" date="1993" name="Plant Sci.">
        <title>Accumulation of defence-related transcripts and cloning of a chitinase mRNA from pea leaves (Pisum sativum L.) inoculated with Ascochyta pisi Lib.</title>
        <authorList>
            <person name="Vad K."/>
            <person name="de Neergaard E."/>
            <person name="Madriz-Ordenana K."/>
            <person name="Mikkelsen J.D."/>
            <person name="Collinge D.B."/>
        </authorList>
    </citation>
    <scope>NUCLEOTIDE SEQUENCE [MRNA]</scope>
    <source>
        <strain>cv. Birte</strain>
        <tissue>Leaf</tissue>
    </source>
</reference>
<keyword id="KW-0119">Carbohydrate metabolism</keyword>
<keyword id="KW-0146">Chitin degradation</keyword>
<keyword id="KW-0147">Chitin-binding</keyword>
<keyword id="KW-1015">Disulfide bond</keyword>
<keyword id="KW-0326">Glycosidase</keyword>
<keyword id="KW-0378">Hydrolase</keyword>
<keyword id="KW-0611">Plant defense</keyword>
<keyword id="KW-0624">Polysaccharide degradation</keyword>
<keyword id="KW-0732">Signal</keyword>